<comment type="function">
    <text evidence="1">F(1)F(0) ATP synthase produces ATP from ADP in the presence of a proton or sodium gradient. F-type ATPases consist of two structural domains, F(1) containing the extramembraneous catalytic core and F(0) containing the membrane proton channel, linked together by a central stalk and a peripheral stalk. During catalysis, ATP synthesis in the catalytic domain of F(1) is coupled via a rotary mechanism of the central stalk subunits to proton translocation.</text>
</comment>
<comment type="function">
    <text evidence="1">This protein is part of the stalk that links CF(0) to CF(1). It either transmits conformational changes from CF(0) to CF(1) or is implicated in proton conduction.</text>
</comment>
<comment type="subunit">
    <text evidence="1">F-type ATPases have 2 components, F(1) - the catalytic core - and F(0) - the membrane proton channel. F(1) has five subunits: alpha(3), beta(3), gamma(1), delta(1), epsilon(1). F(0) has three main subunits: a(1), b(2) and c(10-14). The alpha and beta chains form an alternating ring which encloses part of the gamma chain. F(1) is attached to F(0) by a central stalk formed by the gamma and epsilon chains, while a peripheral stalk is formed by the delta and b chains.</text>
</comment>
<comment type="subcellular location">
    <subcellularLocation>
        <location evidence="1">Cell membrane</location>
        <topology evidence="1">Peripheral membrane protein</topology>
    </subcellularLocation>
</comment>
<comment type="similarity">
    <text evidence="1">Belongs to the ATPase delta chain family.</text>
</comment>
<feature type="chain" id="PRO_0000370991" description="ATP synthase subunit delta">
    <location>
        <begin position="1"/>
        <end position="184"/>
    </location>
</feature>
<dbReference type="EMBL" id="CU207366">
    <property type="protein sequence ID" value="CAL68210.1"/>
    <property type="molecule type" value="Genomic_DNA"/>
</dbReference>
<dbReference type="RefSeq" id="WP_011711111.1">
    <property type="nucleotide sequence ID" value="NC_008571.1"/>
</dbReference>
<dbReference type="SMR" id="A0M6G5"/>
<dbReference type="STRING" id="411154.GFO_3267"/>
<dbReference type="KEGG" id="gfo:GFO_3267"/>
<dbReference type="eggNOG" id="COG0712">
    <property type="taxonomic scope" value="Bacteria"/>
</dbReference>
<dbReference type="HOGENOM" id="CLU_085114_4_1_10"/>
<dbReference type="OrthoDB" id="9802471at2"/>
<dbReference type="Proteomes" id="UP000000755">
    <property type="component" value="Chromosome"/>
</dbReference>
<dbReference type="GO" id="GO:0005886">
    <property type="term" value="C:plasma membrane"/>
    <property type="evidence" value="ECO:0007669"/>
    <property type="project" value="UniProtKB-SubCell"/>
</dbReference>
<dbReference type="GO" id="GO:0045259">
    <property type="term" value="C:proton-transporting ATP synthase complex"/>
    <property type="evidence" value="ECO:0007669"/>
    <property type="project" value="UniProtKB-KW"/>
</dbReference>
<dbReference type="GO" id="GO:0046933">
    <property type="term" value="F:proton-transporting ATP synthase activity, rotational mechanism"/>
    <property type="evidence" value="ECO:0007669"/>
    <property type="project" value="UniProtKB-UniRule"/>
</dbReference>
<dbReference type="Gene3D" id="1.10.520.20">
    <property type="entry name" value="N-terminal domain of the delta subunit of the F1F0-ATP synthase"/>
    <property type="match status" value="1"/>
</dbReference>
<dbReference type="HAMAP" id="MF_01416">
    <property type="entry name" value="ATP_synth_delta_bact"/>
    <property type="match status" value="1"/>
</dbReference>
<dbReference type="InterPro" id="IPR026015">
    <property type="entry name" value="ATP_synth_OSCP/delta_N_sf"/>
</dbReference>
<dbReference type="InterPro" id="IPR000711">
    <property type="entry name" value="ATPase_OSCP/dsu"/>
</dbReference>
<dbReference type="NCBIfam" id="TIGR01145">
    <property type="entry name" value="ATP_synt_delta"/>
    <property type="match status" value="1"/>
</dbReference>
<dbReference type="PANTHER" id="PTHR11910">
    <property type="entry name" value="ATP SYNTHASE DELTA CHAIN"/>
    <property type="match status" value="1"/>
</dbReference>
<dbReference type="Pfam" id="PF00213">
    <property type="entry name" value="OSCP"/>
    <property type="match status" value="1"/>
</dbReference>
<dbReference type="PRINTS" id="PR00125">
    <property type="entry name" value="ATPASEDELTA"/>
</dbReference>
<dbReference type="SUPFAM" id="SSF47928">
    <property type="entry name" value="N-terminal domain of the delta subunit of the F1F0-ATP synthase"/>
    <property type="match status" value="1"/>
</dbReference>
<keyword id="KW-0066">ATP synthesis</keyword>
<keyword id="KW-1003">Cell membrane</keyword>
<keyword id="KW-0139">CF(1)</keyword>
<keyword id="KW-0375">Hydrogen ion transport</keyword>
<keyword id="KW-0406">Ion transport</keyword>
<keyword id="KW-0472">Membrane</keyword>
<keyword id="KW-0813">Transport</keyword>
<sequence>MRGTRAAQRYAKAILSLAKDKNSAEAVNEDMISISKTVVNSRDLENMLTSPVIKDSTKKSALLEIFKDLNTITKGAIDILLENGRIGILHLVARQYIIKFNELNNVRQAVVTTAVPLDKELEAVILSKVKELTGSEASLKSVIDEDIIGGFVLRVGDLQYDASVSRNLRRLERELKDNTYVSKI</sequence>
<proteinExistence type="inferred from homology"/>
<gene>
    <name evidence="1" type="primary">atpH</name>
    <name type="ordered locus">GFO_3267</name>
</gene>
<evidence type="ECO:0000255" key="1">
    <source>
        <dbReference type="HAMAP-Rule" id="MF_01416"/>
    </source>
</evidence>
<reference key="1">
    <citation type="journal article" date="2006" name="Environ. Microbiol.">
        <title>Whole genome analysis of the marine Bacteroidetes'Gramella forsetii' reveals adaptations to degradation of polymeric organic matter.</title>
        <authorList>
            <person name="Bauer M."/>
            <person name="Kube M."/>
            <person name="Teeling H."/>
            <person name="Richter M."/>
            <person name="Lombardot T."/>
            <person name="Allers E."/>
            <person name="Wuerdemann C.A."/>
            <person name="Quast C."/>
            <person name="Kuhl H."/>
            <person name="Knaust F."/>
            <person name="Woebken D."/>
            <person name="Bischof K."/>
            <person name="Mussmann M."/>
            <person name="Choudhuri J.V."/>
            <person name="Meyer F."/>
            <person name="Reinhardt R."/>
            <person name="Amann R.I."/>
            <person name="Gloeckner F.O."/>
        </authorList>
    </citation>
    <scope>NUCLEOTIDE SEQUENCE [LARGE SCALE GENOMIC DNA]</scope>
    <source>
        <strain>DSM 17595 / CGMCC 1.15422 / KT0803</strain>
    </source>
</reference>
<protein>
    <recommendedName>
        <fullName evidence="1">ATP synthase subunit delta</fullName>
    </recommendedName>
    <alternativeName>
        <fullName evidence="1">ATP synthase F(1) sector subunit delta</fullName>
    </alternativeName>
    <alternativeName>
        <fullName evidence="1">F-type ATPase subunit delta</fullName>
        <shortName evidence="1">F-ATPase subunit delta</shortName>
    </alternativeName>
</protein>
<organism>
    <name type="scientific">Christiangramia forsetii (strain DSM 17595 / CGMCC 1.15422 / KT0803)</name>
    <name type="common">Gramella forsetii</name>
    <dbReference type="NCBI Taxonomy" id="411154"/>
    <lineage>
        <taxon>Bacteria</taxon>
        <taxon>Pseudomonadati</taxon>
        <taxon>Bacteroidota</taxon>
        <taxon>Flavobacteriia</taxon>
        <taxon>Flavobacteriales</taxon>
        <taxon>Flavobacteriaceae</taxon>
        <taxon>Christiangramia</taxon>
    </lineage>
</organism>
<name>ATPD_CHRFK</name>
<accession>A0M6G5</accession>